<feature type="chain" id="PRO_1000079491" description="NAD kinase">
    <location>
        <begin position="1"/>
        <end position="292"/>
    </location>
</feature>
<feature type="active site" description="Proton acceptor" evidence="1">
    <location>
        <position position="73"/>
    </location>
</feature>
<feature type="binding site" evidence="1">
    <location>
        <begin position="73"/>
        <end position="74"/>
    </location>
    <ligand>
        <name>NAD(+)</name>
        <dbReference type="ChEBI" id="CHEBI:57540"/>
    </ligand>
</feature>
<feature type="binding site" evidence="1">
    <location>
        <begin position="147"/>
        <end position="148"/>
    </location>
    <ligand>
        <name>NAD(+)</name>
        <dbReference type="ChEBI" id="CHEBI:57540"/>
    </ligand>
</feature>
<feature type="binding site" evidence="1">
    <location>
        <position position="158"/>
    </location>
    <ligand>
        <name>NAD(+)</name>
        <dbReference type="ChEBI" id="CHEBI:57540"/>
    </ligand>
</feature>
<feature type="binding site" evidence="1">
    <location>
        <position position="175"/>
    </location>
    <ligand>
        <name>NAD(+)</name>
        <dbReference type="ChEBI" id="CHEBI:57540"/>
    </ligand>
</feature>
<feature type="binding site" evidence="1">
    <location>
        <position position="177"/>
    </location>
    <ligand>
        <name>NAD(+)</name>
        <dbReference type="ChEBI" id="CHEBI:57540"/>
    </ligand>
</feature>
<feature type="binding site" evidence="1">
    <location>
        <begin position="188"/>
        <end position="193"/>
    </location>
    <ligand>
        <name>NAD(+)</name>
        <dbReference type="ChEBI" id="CHEBI:57540"/>
    </ligand>
</feature>
<feature type="binding site" evidence="1">
    <location>
        <position position="247"/>
    </location>
    <ligand>
        <name>NAD(+)</name>
        <dbReference type="ChEBI" id="CHEBI:57540"/>
    </ligand>
</feature>
<proteinExistence type="inferred from homology"/>
<comment type="function">
    <text evidence="1">Involved in the regulation of the intracellular balance of NAD and NADP, and is a key enzyme in the biosynthesis of NADP. Catalyzes specifically the phosphorylation on 2'-hydroxyl of the adenosine moiety of NAD to yield NADP.</text>
</comment>
<comment type="catalytic activity">
    <reaction evidence="1">
        <text>NAD(+) + ATP = ADP + NADP(+) + H(+)</text>
        <dbReference type="Rhea" id="RHEA:18629"/>
        <dbReference type="ChEBI" id="CHEBI:15378"/>
        <dbReference type="ChEBI" id="CHEBI:30616"/>
        <dbReference type="ChEBI" id="CHEBI:57540"/>
        <dbReference type="ChEBI" id="CHEBI:58349"/>
        <dbReference type="ChEBI" id="CHEBI:456216"/>
        <dbReference type="EC" id="2.7.1.23"/>
    </reaction>
</comment>
<comment type="cofactor">
    <cofactor evidence="1">
        <name>a divalent metal cation</name>
        <dbReference type="ChEBI" id="CHEBI:60240"/>
    </cofactor>
</comment>
<comment type="subcellular location">
    <subcellularLocation>
        <location evidence="1">Cytoplasm</location>
    </subcellularLocation>
</comment>
<comment type="similarity">
    <text evidence="1">Belongs to the NAD kinase family.</text>
</comment>
<accession>A8A3C1</accession>
<protein>
    <recommendedName>
        <fullName evidence="1">NAD kinase</fullName>
        <ecNumber evidence="1">2.7.1.23</ecNumber>
    </recommendedName>
    <alternativeName>
        <fullName evidence="1">ATP-dependent NAD kinase</fullName>
    </alternativeName>
</protein>
<evidence type="ECO:0000255" key="1">
    <source>
        <dbReference type="HAMAP-Rule" id="MF_00361"/>
    </source>
</evidence>
<gene>
    <name evidence="1" type="primary">nadK</name>
    <name type="ordered locus">EcHS_A2773</name>
</gene>
<reference key="1">
    <citation type="journal article" date="2008" name="J. Bacteriol.">
        <title>The pangenome structure of Escherichia coli: comparative genomic analysis of E. coli commensal and pathogenic isolates.</title>
        <authorList>
            <person name="Rasko D.A."/>
            <person name="Rosovitz M.J."/>
            <person name="Myers G.S.A."/>
            <person name="Mongodin E.F."/>
            <person name="Fricke W.F."/>
            <person name="Gajer P."/>
            <person name="Crabtree J."/>
            <person name="Sebaihia M."/>
            <person name="Thomson N.R."/>
            <person name="Chaudhuri R."/>
            <person name="Henderson I.R."/>
            <person name="Sperandio V."/>
            <person name="Ravel J."/>
        </authorList>
    </citation>
    <scope>NUCLEOTIDE SEQUENCE [LARGE SCALE GENOMIC DNA]</scope>
    <source>
        <strain>HS</strain>
    </source>
</reference>
<name>NADK_ECOHS</name>
<keyword id="KW-0067">ATP-binding</keyword>
<keyword id="KW-0963">Cytoplasm</keyword>
<keyword id="KW-0418">Kinase</keyword>
<keyword id="KW-0520">NAD</keyword>
<keyword id="KW-0521">NADP</keyword>
<keyword id="KW-0547">Nucleotide-binding</keyword>
<keyword id="KW-0808">Transferase</keyword>
<sequence length="292" mass="32566">MNNHFKCIGIVGHPRHPTALTTHEMLYRWLCTKGYEVIVEQQIAHELQLKNVKTGTLAEIGQLADLAVVVGGDGNMLGAARTLARYDIKVIGINRGNLGFLTDLDPDNAQQQLADVLEGHYISEKRFLLEAQVCQQDCQKRISTAINEVVLHPGKVAHMIEFEVYIDEIFAFSQRSDGLIISTPTGSTAYSLSAGGPILTPSLDAITLVPMFPHTLSARPLVINSSSTIRLRFSHRRNDLEISCDSQIALPIQEGEDVLIRRCDYHLNLIHPKDYSYFNTLSTKLGWSKKLF</sequence>
<organism>
    <name type="scientific">Escherichia coli O9:H4 (strain HS)</name>
    <dbReference type="NCBI Taxonomy" id="331112"/>
    <lineage>
        <taxon>Bacteria</taxon>
        <taxon>Pseudomonadati</taxon>
        <taxon>Pseudomonadota</taxon>
        <taxon>Gammaproteobacteria</taxon>
        <taxon>Enterobacterales</taxon>
        <taxon>Enterobacteriaceae</taxon>
        <taxon>Escherichia</taxon>
    </lineage>
</organism>
<dbReference type="EC" id="2.7.1.23" evidence="1"/>
<dbReference type="EMBL" id="CP000802">
    <property type="protein sequence ID" value="ABV07025.1"/>
    <property type="molecule type" value="Genomic_DNA"/>
</dbReference>
<dbReference type="RefSeq" id="WP_001059169.1">
    <property type="nucleotide sequence ID" value="NC_009800.1"/>
</dbReference>
<dbReference type="SMR" id="A8A3C1"/>
<dbReference type="GeneID" id="93774464"/>
<dbReference type="KEGG" id="ecx:EcHS_A2773"/>
<dbReference type="HOGENOM" id="CLU_008831_0_1_6"/>
<dbReference type="GO" id="GO:0005737">
    <property type="term" value="C:cytoplasm"/>
    <property type="evidence" value="ECO:0007669"/>
    <property type="project" value="UniProtKB-SubCell"/>
</dbReference>
<dbReference type="GO" id="GO:0005524">
    <property type="term" value="F:ATP binding"/>
    <property type="evidence" value="ECO:0007669"/>
    <property type="project" value="UniProtKB-KW"/>
</dbReference>
<dbReference type="GO" id="GO:0046872">
    <property type="term" value="F:metal ion binding"/>
    <property type="evidence" value="ECO:0007669"/>
    <property type="project" value="UniProtKB-UniRule"/>
</dbReference>
<dbReference type="GO" id="GO:0051287">
    <property type="term" value="F:NAD binding"/>
    <property type="evidence" value="ECO:0007669"/>
    <property type="project" value="UniProtKB-ARBA"/>
</dbReference>
<dbReference type="GO" id="GO:0003951">
    <property type="term" value="F:NAD+ kinase activity"/>
    <property type="evidence" value="ECO:0007669"/>
    <property type="project" value="UniProtKB-UniRule"/>
</dbReference>
<dbReference type="GO" id="GO:0019674">
    <property type="term" value="P:NAD metabolic process"/>
    <property type="evidence" value="ECO:0007669"/>
    <property type="project" value="InterPro"/>
</dbReference>
<dbReference type="GO" id="GO:0006741">
    <property type="term" value="P:NADP biosynthetic process"/>
    <property type="evidence" value="ECO:0007669"/>
    <property type="project" value="UniProtKB-UniRule"/>
</dbReference>
<dbReference type="FunFam" id="2.60.200.30:FF:000001">
    <property type="entry name" value="NAD kinase"/>
    <property type="match status" value="1"/>
</dbReference>
<dbReference type="FunFam" id="3.40.50.10330:FF:000004">
    <property type="entry name" value="NAD kinase"/>
    <property type="match status" value="1"/>
</dbReference>
<dbReference type="Gene3D" id="3.40.50.10330">
    <property type="entry name" value="Probable inorganic polyphosphate/atp-NAD kinase, domain 1"/>
    <property type="match status" value="1"/>
</dbReference>
<dbReference type="Gene3D" id="2.60.200.30">
    <property type="entry name" value="Probable inorganic polyphosphate/atp-NAD kinase, domain 2"/>
    <property type="match status" value="1"/>
</dbReference>
<dbReference type="HAMAP" id="MF_00361">
    <property type="entry name" value="NAD_kinase"/>
    <property type="match status" value="1"/>
</dbReference>
<dbReference type="InterPro" id="IPR017438">
    <property type="entry name" value="ATP-NAD_kinase_N"/>
</dbReference>
<dbReference type="InterPro" id="IPR017437">
    <property type="entry name" value="ATP-NAD_kinase_PpnK-typ_C"/>
</dbReference>
<dbReference type="InterPro" id="IPR016064">
    <property type="entry name" value="NAD/diacylglycerol_kinase_sf"/>
</dbReference>
<dbReference type="InterPro" id="IPR002504">
    <property type="entry name" value="NADK"/>
</dbReference>
<dbReference type="NCBIfam" id="NF002306">
    <property type="entry name" value="PRK01231.1"/>
    <property type="match status" value="1"/>
</dbReference>
<dbReference type="NCBIfam" id="NF002893">
    <property type="entry name" value="PRK03378.1"/>
    <property type="match status" value="1"/>
</dbReference>
<dbReference type="PANTHER" id="PTHR20275">
    <property type="entry name" value="NAD KINASE"/>
    <property type="match status" value="1"/>
</dbReference>
<dbReference type="PANTHER" id="PTHR20275:SF0">
    <property type="entry name" value="NAD KINASE"/>
    <property type="match status" value="1"/>
</dbReference>
<dbReference type="Pfam" id="PF01513">
    <property type="entry name" value="NAD_kinase"/>
    <property type="match status" value="1"/>
</dbReference>
<dbReference type="Pfam" id="PF20143">
    <property type="entry name" value="NAD_kinase_C"/>
    <property type="match status" value="1"/>
</dbReference>
<dbReference type="SUPFAM" id="SSF111331">
    <property type="entry name" value="NAD kinase/diacylglycerol kinase-like"/>
    <property type="match status" value="1"/>
</dbReference>